<comment type="subcellular location">
    <subcellularLocation>
        <location evidence="2">Membrane</location>
        <topology evidence="2">Multi-pass membrane protein</topology>
    </subcellularLocation>
</comment>
<name>TM140_RAT</name>
<keyword id="KW-0325">Glycoprotein</keyword>
<keyword id="KW-0472">Membrane</keyword>
<keyword id="KW-1185">Reference proteome</keyword>
<keyword id="KW-0812">Transmembrane</keyword>
<keyword id="KW-1133">Transmembrane helix</keyword>
<proteinExistence type="evidence at transcript level"/>
<accession>Q5M826</accession>
<evidence type="ECO:0000255" key="1"/>
<evidence type="ECO:0000305" key="2"/>
<dbReference type="EMBL" id="BC088293">
    <property type="protein sequence ID" value="AAH88293.1"/>
    <property type="molecule type" value="mRNA"/>
</dbReference>
<dbReference type="RefSeq" id="NP_001009709.1">
    <property type="nucleotide sequence ID" value="NM_001009709.1"/>
</dbReference>
<dbReference type="FunCoup" id="Q5M826">
    <property type="interactions" value="141"/>
</dbReference>
<dbReference type="STRING" id="10116.ENSRNOP00000031501"/>
<dbReference type="GlyCosmos" id="Q5M826">
    <property type="glycosylation" value="1 site, No reported glycans"/>
</dbReference>
<dbReference type="GlyGen" id="Q5M826">
    <property type="glycosylation" value="1 site"/>
</dbReference>
<dbReference type="PhosphoSitePlus" id="Q5M826"/>
<dbReference type="PaxDb" id="10116-ENSRNOP00000031501"/>
<dbReference type="Ensembl" id="ENSRNOT00000029845.7">
    <property type="protein sequence ID" value="ENSRNOP00000031501.4"/>
    <property type="gene ID" value="ENSRNOG00000026965.7"/>
</dbReference>
<dbReference type="GeneID" id="362334"/>
<dbReference type="KEGG" id="rno:362334"/>
<dbReference type="UCSC" id="RGD:1549759">
    <property type="organism name" value="rat"/>
</dbReference>
<dbReference type="AGR" id="RGD:1549759"/>
<dbReference type="CTD" id="55281"/>
<dbReference type="RGD" id="1549759">
    <property type="gene designation" value="Tmem140"/>
</dbReference>
<dbReference type="eggNOG" id="ENOG502S6FP">
    <property type="taxonomic scope" value="Eukaryota"/>
</dbReference>
<dbReference type="GeneTree" id="ENSGT00390000014089"/>
<dbReference type="HOGENOM" id="CLU_125527_0_0_1"/>
<dbReference type="InParanoid" id="Q5M826"/>
<dbReference type="OMA" id="FYALVWE"/>
<dbReference type="OrthoDB" id="9898473at2759"/>
<dbReference type="PhylomeDB" id="Q5M826"/>
<dbReference type="TreeFam" id="TF336296"/>
<dbReference type="PRO" id="PR:Q5M826"/>
<dbReference type="Proteomes" id="UP000002494">
    <property type="component" value="Chromosome 4"/>
</dbReference>
<dbReference type="Bgee" id="ENSRNOG00000026965">
    <property type="expression patterns" value="Expressed in liver and 18 other cell types or tissues"/>
</dbReference>
<dbReference type="GO" id="GO:0016020">
    <property type="term" value="C:membrane"/>
    <property type="evidence" value="ECO:0007669"/>
    <property type="project" value="UniProtKB-SubCell"/>
</dbReference>
<dbReference type="InterPro" id="IPR028038">
    <property type="entry name" value="TM140"/>
</dbReference>
<dbReference type="PANTHER" id="PTHR16103">
    <property type="entry name" value="TRANSMEMBRANE PROTEIN 140"/>
    <property type="match status" value="1"/>
</dbReference>
<dbReference type="PANTHER" id="PTHR16103:SF0">
    <property type="entry name" value="TRANSMEMBRANE PROTEIN 140"/>
    <property type="match status" value="1"/>
</dbReference>
<dbReference type="Pfam" id="PF14985">
    <property type="entry name" value="TM140"/>
    <property type="match status" value="1"/>
</dbReference>
<sequence>MAISRVWRNRLSFMAIMILVAMVLSLMSYALLWKAGNLTDVPNLRIGFYNFCLWKEDIGSLECYNFPELGVLGIPQVGLALARLGVYGALVLAVFVPLPLLLAQCNSDEGEWRLAVGFLGASSVLLAGGLSLFLFLVWKWLRLSFLGPGFLSLCLAQALLIILLMAMVMFPPRDKKDKNHWENC</sequence>
<protein>
    <recommendedName>
        <fullName>Transmembrane protein 140</fullName>
    </recommendedName>
</protein>
<gene>
    <name type="primary">Tmem140</name>
</gene>
<reference key="1">
    <citation type="journal article" date="2004" name="Genome Res.">
        <title>The status, quality, and expansion of the NIH full-length cDNA project: the Mammalian Gene Collection (MGC).</title>
        <authorList>
            <consortium name="The MGC Project Team"/>
        </authorList>
    </citation>
    <scope>NUCLEOTIDE SEQUENCE [LARGE SCALE MRNA]</scope>
    <source>
        <tissue>Liver</tissue>
    </source>
</reference>
<organism>
    <name type="scientific">Rattus norvegicus</name>
    <name type="common">Rat</name>
    <dbReference type="NCBI Taxonomy" id="10116"/>
    <lineage>
        <taxon>Eukaryota</taxon>
        <taxon>Metazoa</taxon>
        <taxon>Chordata</taxon>
        <taxon>Craniata</taxon>
        <taxon>Vertebrata</taxon>
        <taxon>Euteleostomi</taxon>
        <taxon>Mammalia</taxon>
        <taxon>Eutheria</taxon>
        <taxon>Euarchontoglires</taxon>
        <taxon>Glires</taxon>
        <taxon>Rodentia</taxon>
        <taxon>Myomorpha</taxon>
        <taxon>Muroidea</taxon>
        <taxon>Muridae</taxon>
        <taxon>Murinae</taxon>
        <taxon>Rattus</taxon>
    </lineage>
</organism>
<feature type="chain" id="PRO_0000274359" description="Transmembrane protein 140">
    <location>
        <begin position="1"/>
        <end position="184"/>
    </location>
</feature>
<feature type="topological domain" description="Cytoplasmic" evidence="1">
    <location>
        <begin position="1"/>
        <end position="12"/>
    </location>
</feature>
<feature type="transmembrane region" description="Helical" evidence="1">
    <location>
        <begin position="13"/>
        <end position="33"/>
    </location>
</feature>
<feature type="topological domain" description="Extracellular" evidence="1">
    <location>
        <begin position="34"/>
        <end position="83"/>
    </location>
</feature>
<feature type="transmembrane region" description="Helical" evidence="1">
    <location>
        <begin position="84"/>
        <end position="104"/>
    </location>
</feature>
<feature type="topological domain" description="Cytoplasmic" evidence="1">
    <location>
        <begin position="105"/>
        <end position="117"/>
    </location>
</feature>
<feature type="transmembrane region" description="Helical" evidence="1">
    <location>
        <begin position="118"/>
        <end position="138"/>
    </location>
</feature>
<feature type="topological domain" description="Extracellular" evidence="1">
    <location>
        <begin position="139"/>
        <end position="149"/>
    </location>
</feature>
<feature type="transmembrane region" description="Helical" evidence="1">
    <location>
        <begin position="150"/>
        <end position="170"/>
    </location>
</feature>
<feature type="topological domain" description="Cytoplasmic" evidence="1">
    <location>
        <begin position="171"/>
        <end position="184"/>
    </location>
</feature>
<feature type="glycosylation site" description="N-linked (GlcNAc...) asparagine" evidence="1">
    <location>
        <position position="37"/>
    </location>
</feature>